<comment type="function">
    <text evidence="1">Functions in the biosynthesis of branched-chain amino acids. Catalyzes the dehydration of (2R,3R)-2,3-dihydroxy-3-methylpentanoate (2,3-dihydroxy-3-methylvalerate) into 2-oxo-3-methylpentanoate (2-oxo-3-methylvalerate) and of (2R)-2,3-dihydroxy-3-methylbutanoate (2,3-dihydroxyisovalerate) into 2-oxo-3-methylbutanoate (2-oxoisovalerate), the penultimate precursor to L-isoleucine and L-valine, respectively.</text>
</comment>
<comment type="catalytic activity">
    <reaction evidence="1">
        <text>(2R)-2,3-dihydroxy-3-methylbutanoate = 3-methyl-2-oxobutanoate + H2O</text>
        <dbReference type="Rhea" id="RHEA:24809"/>
        <dbReference type="ChEBI" id="CHEBI:11851"/>
        <dbReference type="ChEBI" id="CHEBI:15377"/>
        <dbReference type="ChEBI" id="CHEBI:49072"/>
        <dbReference type="EC" id="4.2.1.9"/>
    </reaction>
    <physiologicalReaction direction="left-to-right" evidence="1">
        <dbReference type="Rhea" id="RHEA:24810"/>
    </physiologicalReaction>
</comment>
<comment type="catalytic activity">
    <reaction evidence="1">
        <text>(2R,3R)-2,3-dihydroxy-3-methylpentanoate = (S)-3-methyl-2-oxopentanoate + H2O</text>
        <dbReference type="Rhea" id="RHEA:27694"/>
        <dbReference type="ChEBI" id="CHEBI:15377"/>
        <dbReference type="ChEBI" id="CHEBI:35146"/>
        <dbReference type="ChEBI" id="CHEBI:49258"/>
        <dbReference type="EC" id="4.2.1.9"/>
    </reaction>
    <physiologicalReaction direction="left-to-right" evidence="1">
        <dbReference type="Rhea" id="RHEA:27695"/>
    </physiologicalReaction>
</comment>
<comment type="cofactor">
    <cofactor evidence="1">
        <name>[2Fe-2S] cluster</name>
        <dbReference type="ChEBI" id="CHEBI:190135"/>
    </cofactor>
    <text evidence="1">Binds 1 [2Fe-2S] cluster per subunit. This cluster acts as a Lewis acid cofactor.</text>
</comment>
<comment type="cofactor">
    <cofactor evidence="1">
        <name>Mg(2+)</name>
        <dbReference type="ChEBI" id="CHEBI:18420"/>
    </cofactor>
</comment>
<comment type="pathway">
    <text evidence="1">Amino-acid biosynthesis; L-isoleucine biosynthesis; L-isoleucine from 2-oxobutanoate: step 3/4.</text>
</comment>
<comment type="pathway">
    <text evidence="1">Amino-acid biosynthesis; L-valine biosynthesis; L-valine from pyruvate: step 3/4.</text>
</comment>
<comment type="subunit">
    <text evidence="1">Homodimer.</text>
</comment>
<comment type="similarity">
    <text evidence="1">Belongs to the IlvD/Edd family.</text>
</comment>
<keyword id="KW-0001">2Fe-2S</keyword>
<keyword id="KW-0028">Amino-acid biosynthesis</keyword>
<keyword id="KW-0100">Branched-chain amino acid biosynthesis</keyword>
<keyword id="KW-0408">Iron</keyword>
<keyword id="KW-0411">Iron-sulfur</keyword>
<keyword id="KW-0456">Lyase</keyword>
<keyword id="KW-0460">Magnesium</keyword>
<keyword id="KW-0479">Metal-binding</keyword>
<keyword id="KW-1185">Reference proteome</keyword>
<sequence length="574" mass="60812">MNAKTNIKQRLPSRHVTEGPARAPHRSYFYAMGLTTEQIHQPFVGVASCWNEAAPCNIALMRQAQAVKKGVAHAGGTPREFCTITVTDGIAMGHDGMRSSLPSRECIADSVELTVRGHAYDALVGLAGCDKSLPGMMMAMVRLNVPSIFIYGGSILPGNFRGQQVTVQDMFEAVGKHSVGAMSDEDLDEIERVACPSAGACGAQFTANTMATVSEAIGLALPYSAGAPAPYEIRDAFCMTAGEKVMELIDQNIRPRDIVTRKALENAAAVVAASGGSTNAALHLPAIAHECGIKFDLFDVAEIFKKTPYVADLKPGGRYVAKDMFEVGGIPLLMKTLLDNGFLHGDCITVTGRTIAENLKSVKWNPHQDVVHPADKPITVTGGVVGLKGNLAPEGAIVKVAGMSNLRFTGPARCFDREEDAFEAVQNRTYREGEVIVIRYEGPKGGPGMREMLQTTAALTGQGMGGKIALITDGRFSGATRGFCIGHVGPEAAIGGPIGLLEDGDIIEIDAVAGTLNVKLSDQELAQRKTKWSARATNHTTGALWKYAQQVGPAVGGAVTHPGGAHEKQCYADI</sequence>
<dbReference type="EC" id="4.2.1.9" evidence="1"/>
<dbReference type="EMBL" id="BA000040">
    <property type="protein sequence ID" value="BAC50028.1"/>
    <property type="molecule type" value="Genomic_DNA"/>
</dbReference>
<dbReference type="RefSeq" id="NP_771403.1">
    <property type="nucleotide sequence ID" value="NC_004463.1"/>
</dbReference>
<dbReference type="RefSeq" id="WP_011087531.1">
    <property type="nucleotide sequence ID" value="NC_004463.1"/>
</dbReference>
<dbReference type="SMR" id="Q89KY5"/>
<dbReference type="STRING" id="224911.AAV28_21100"/>
<dbReference type="EnsemblBacteria" id="BAC50028">
    <property type="protein sequence ID" value="BAC50028"/>
    <property type="gene ID" value="BAC50028"/>
</dbReference>
<dbReference type="GeneID" id="46491769"/>
<dbReference type="KEGG" id="bja:bll4763"/>
<dbReference type="PATRIC" id="fig|224911.44.peg.4597"/>
<dbReference type="eggNOG" id="COG0129">
    <property type="taxonomic scope" value="Bacteria"/>
</dbReference>
<dbReference type="HOGENOM" id="CLU_014271_4_2_5"/>
<dbReference type="InParanoid" id="Q89KY5"/>
<dbReference type="OrthoDB" id="7793094at2"/>
<dbReference type="PhylomeDB" id="Q89KY5"/>
<dbReference type="UniPathway" id="UPA00047">
    <property type="reaction ID" value="UER00057"/>
</dbReference>
<dbReference type="UniPathway" id="UPA00049">
    <property type="reaction ID" value="UER00061"/>
</dbReference>
<dbReference type="Proteomes" id="UP000002526">
    <property type="component" value="Chromosome"/>
</dbReference>
<dbReference type="GO" id="GO:0051537">
    <property type="term" value="F:2 iron, 2 sulfur cluster binding"/>
    <property type="evidence" value="ECO:0007669"/>
    <property type="project" value="UniProtKB-UniRule"/>
</dbReference>
<dbReference type="GO" id="GO:0004160">
    <property type="term" value="F:dihydroxy-acid dehydratase activity"/>
    <property type="evidence" value="ECO:0000318"/>
    <property type="project" value="GO_Central"/>
</dbReference>
<dbReference type="GO" id="GO:0000287">
    <property type="term" value="F:magnesium ion binding"/>
    <property type="evidence" value="ECO:0007669"/>
    <property type="project" value="UniProtKB-UniRule"/>
</dbReference>
<dbReference type="GO" id="GO:0009082">
    <property type="term" value="P:branched-chain amino acid biosynthetic process"/>
    <property type="evidence" value="ECO:0000318"/>
    <property type="project" value="GO_Central"/>
</dbReference>
<dbReference type="GO" id="GO:0009097">
    <property type="term" value="P:isoleucine biosynthetic process"/>
    <property type="evidence" value="ECO:0007669"/>
    <property type="project" value="UniProtKB-UniRule"/>
</dbReference>
<dbReference type="GO" id="GO:0009099">
    <property type="term" value="P:L-valine biosynthetic process"/>
    <property type="evidence" value="ECO:0007669"/>
    <property type="project" value="UniProtKB-UniRule"/>
</dbReference>
<dbReference type="FunFam" id="3.50.30.80:FF:000001">
    <property type="entry name" value="Dihydroxy-acid dehydratase"/>
    <property type="match status" value="1"/>
</dbReference>
<dbReference type="Gene3D" id="3.50.30.80">
    <property type="entry name" value="IlvD/EDD C-terminal domain-like"/>
    <property type="match status" value="1"/>
</dbReference>
<dbReference type="HAMAP" id="MF_00012">
    <property type="entry name" value="IlvD"/>
    <property type="match status" value="1"/>
</dbReference>
<dbReference type="InterPro" id="IPR050165">
    <property type="entry name" value="DHAD_IlvD/Edd"/>
</dbReference>
<dbReference type="InterPro" id="IPR042096">
    <property type="entry name" value="Dihydro-acid_dehy_C"/>
</dbReference>
<dbReference type="InterPro" id="IPR004404">
    <property type="entry name" value="DihydroxyA_deHydtase"/>
</dbReference>
<dbReference type="InterPro" id="IPR020558">
    <property type="entry name" value="DiOHA_6PGluconate_deHydtase_CS"/>
</dbReference>
<dbReference type="InterPro" id="IPR056740">
    <property type="entry name" value="ILV_EDD_C"/>
</dbReference>
<dbReference type="InterPro" id="IPR000581">
    <property type="entry name" value="ILV_EDD_N"/>
</dbReference>
<dbReference type="InterPro" id="IPR037237">
    <property type="entry name" value="IlvD/EDD_N"/>
</dbReference>
<dbReference type="NCBIfam" id="TIGR00110">
    <property type="entry name" value="ilvD"/>
    <property type="match status" value="1"/>
</dbReference>
<dbReference type="NCBIfam" id="NF002068">
    <property type="entry name" value="PRK00911.1"/>
    <property type="match status" value="1"/>
</dbReference>
<dbReference type="PANTHER" id="PTHR21000">
    <property type="entry name" value="DIHYDROXY-ACID DEHYDRATASE DAD"/>
    <property type="match status" value="1"/>
</dbReference>
<dbReference type="PANTHER" id="PTHR21000:SF5">
    <property type="entry name" value="DIHYDROXY-ACID DEHYDRATASE, MITOCHONDRIAL"/>
    <property type="match status" value="1"/>
</dbReference>
<dbReference type="Pfam" id="PF24877">
    <property type="entry name" value="ILV_EDD_C"/>
    <property type="match status" value="1"/>
</dbReference>
<dbReference type="Pfam" id="PF00920">
    <property type="entry name" value="ILVD_EDD_N"/>
    <property type="match status" value="1"/>
</dbReference>
<dbReference type="SUPFAM" id="SSF143975">
    <property type="entry name" value="IlvD/EDD N-terminal domain-like"/>
    <property type="match status" value="1"/>
</dbReference>
<dbReference type="SUPFAM" id="SSF52016">
    <property type="entry name" value="LeuD/IlvD-like"/>
    <property type="match status" value="1"/>
</dbReference>
<dbReference type="PROSITE" id="PS00886">
    <property type="entry name" value="ILVD_EDD_1"/>
    <property type="match status" value="1"/>
</dbReference>
<dbReference type="PROSITE" id="PS00887">
    <property type="entry name" value="ILVD_EDD_2"/>
    <property type="match status" value="1"/>
</dbReference>
<name>ILVD2_BRADU</name>
<evidence type="ECO:0000255" key="1">
    <source>
        <dbReference type="HAMAP-Rule" id="MF_00012"/>
    </source>
</evidence>
<evidence type="ECO:0000256" key="2">
    <source>
        <dbReference type="SAM" id="MobiDB-lite"/>
    </source>
</evidence>
<reference key="1">
    <citation type="journal article" date="2002" name="DNA Res.">
        <title>Complete genomic sequence of nitrogen-fixing symbiotic bacterium Bradyrhizobium japonicum USDA110.</title>
        <authorList>
            <person name="Kaneko T."/>
            <person name="Nakamura Y."/>
            <person name="Sato S."/>
            <person name="Minamisawa K."/>
            <person name="Uchiumi T."/>
            <person name="Sasamoto S."/>
            <person name="Watanabe A."/>
            <person name="Idesawa K."/>
            <person name="Iriguchi M."/>
            <person name="Kawashima K."/>
            <person name="Kohara M."/>
            <person name="Matsumoto M."/>
            <person name="Shimpo S."/>
            <person name="Tsuruoka H."/>
            <person name="Wada T."/>
            <person name="Yamada M."/>
            <person name="Tabata S."/>
        </authorList>
    </citation>
    <scope>NUCLEOTIDE SEQUENCE [LARGE SCALE GENOMIC DNA]</scope>
    <source>
        <strain>JCM 10833 / BCRC 13528 / IAM 13628 / NBRC 14792 / USDA 110</strain>
    </source>
</reference>
<feature type="chain" id="PRO_0000103442" description="Dihydroxy-acid dehydratase 2">
    <location>
        <begin position="1"/>
        <end position="574"/>
    </location>
</feature>
<feature type="region of interest" description="Disordered" evidence="2">
    <location>
        <begin position="1"/>
        <end position="20"/>
    </location>
</feature>
<feature type="active site" description="Proton acceptor" evidence="1">
    <location>
        <position position="477"/>
    </location>
</feature>
<feature type="binding site" evidence="1">
    <location>
        <position position="56"/>
    </location>
    <ligand>
        <name>[2Fe-2S] cluster</name>
        <dbReference type="ChEBI" id="CHEBI:190135"/>
    </ligand>
</feature>
<feature type="binding site" evidence="1">
    <location>
        <position position="88"/>
    </location>
    <ligand>
        <name>Mg(2+)</name>
        <dbReference type="ChEBI" id="CHEBI:18420"/>
    </ligand>
</feature>
<feature type="binding site" evidence="1">
    <location>
        <position position="129"/>
    </location>
    <ligand>
        <name>[2Fe-2S] cluster</name>
        <dbReference type="ChEBI" id="CHEBI:190135"/>
    </ligand>
</feature>
<feature type="binding site" evidence="1">
    <location>
        <position position="130"/>
    </location>
    <ligand>
        <name>Mg(2+)</name>
        <dbReference type="ChEBI" id="CHEBI:18420"/>
    </ligand>
</feature>
<feature type="binding site" description="via carbamate group" evidence="1">
    <location>
        <position position="131"/>
    </location>
    <ligand>
        <name>Mg(2+)</name>
        <dbReference type="ChEBI" id="CHEBI:18420"/>
    </ligand>
</feature>
<feature type="binding site" evidence="1">
    <location>
        <position position="201"/>
    </location>
    <ligand>
        <name>[2Fe-2S] cluster</name>
        <dbReference type="ChEBI" id="CHEBI:190135"/>
    </ligand>
</feature>
<feature type="binding site" evidence="1">
    <location>
        <position position="451"/>
    </location>
    <ligand>
        <name>Mg(2+)</name>
        <dbReference type="ChEBI" id="CHEBI:18420"/>
    </ligand>
</feature>
<feature type="modified residue" description="N6-carboxylysine" evidence="1">
    <location>
        <position position="131"/>
    </location>
</feature>
<protein>
    <recommendedName>
        <fullName evidence="1">Dihydroxy-acid dehydratase 2</fullName>
        <shortName evidence="1">DAD 2</shortName>
        <ecNumber evidence="1">4.2.1.9</ecNumber>
    </recommendedName>
</protein>
<accession>Q89KY5</accession>
<gene>
    <name evidence="1" type="primary">ilvD2</name>
    <name type="ordered locus">bll4763</name>
</gene>
<organism>
    <name type="scientific">Bradyrhizobium diazoefficiens (strain JCM 10833 / BCRC 13528 / IAM 13628 / NBRC 14792 / USDA 110)</name>
    <dbReference type="NCBI Taxonomy" id="224911"/>
    <lineage>
        <taxon>Bacteria</taxon>
        <taxon>Pseudomonadati</taxon>
        <taxon>Pseudomonadota</taxon>
        <taxon>Alphaproteobacteria</taxon>
        <taxon>Hyphomicrobiales</taxon>
        <taxon>Nitrobacteraceae</taxon>
        <taxon>Bradyrhizobium</taxon>
    </lineage>
</organism>
<proteinExistence type="inferred from homology"/>